<gene>
    <name evidence="1" type="primary">gpsA</name>
    <name type="ordered locus">RL4493</name>
</gene>
<dbReference type="EC" id="1.1.1.94" evidence="1"/>
<dbReference type="EMBL" id="AM236080">
    <property type="protein sequence ID" value="CAK09978.1"/>
    <property type="molecule type" value="Genomic_DNA"/>
</dbReference>
<dbReference type="RefSeq" id="WP_011653857.1">
    <property type="nucleotide sequence ID" value="NC_008380.1"/>
</dbReference>
<dbReference type="SMR" id="Q1MAQ9"/>
<dbReference type="EnsemblBacteria" id="CAK09978">
    <property type="protein sequence ID" value="CAK09978"/>
    <property type="gene ID" value="RL4493"/>
</dbReference>
<dbReference type="KEGG" id="rle:RL4493"/>
<dbReference type="eggNOG" id="COG0240">
    <property type="taxonomic scope" value="Bacteria"/>
</dbReference>
<dbReference type="HOGENOM" id="CLU_033449_0_2_5"/>
<dbReference type="UniPathway" id="UPA00940"/>
<dbReference type="Proteomes" id="UP000006575">
    <property type="component" value="Chromosome"/>
</dbReference>
<dbReference type="GO" id="GO:0005829">
    <property type="term" value="C:cytosol"/>
    <property type="evidence" value="ECO:0007669"/>
    <property type="project" value="TreeGrafter"/>
</dbReference>
<dbReference type="GO" id="GO:0047952">
    <property type="term" value="F:glycerol-3-phosphate dehydrogenase [NAD(P)+] activity"/>
    <property type="evidence" value="ECO:0007669"/>
    <property type="project" value="UniProtKB-UniRule"/>
</dbReference>
<dbReference type="GO" id="GO:0051287">
    <property type="term" value="F:NAD binding"/>
    <property type="evidence" value="ECO:0007669"/>
    <property type="project" value="InterPro"/>
</dbReference>
<dbReference type="GO" id="GO:0005975">
    <property type="term" value="P:carbohydrate metabolic process"/>
    <property type="evidence" value="ECO:0007669"/>
    <property type="project" value="InterPro"/>
</dbReference>
<dbReference type="GO" id="GO:0046167">
    <property type="term" value="P:glycerol-3-phosphate biosynthetic process"/>
    <property type="evidence" value="ECO:0007669"/>
    <property type="project" value="UniProtKB-UniRule"/>
</dbReference>
<dbReference type="GO" id="GO:0046168">
    <property type="term" value="P:glycerol-3-phosphate catabolic process"/>
    <property type="evidence" value="ECO:0007669"/>
    <property type="project" value="InterPro"/>
</dbReference>
<dbReference type="GO" id="GO:0006650">
    <property type="term" value="P:glycerophospholipid metabolic process"/>
    <property type="evidence" value="ECO:0007669"/>
    <property type="project" value="UniProtKB-UniRule"/>
</dbReference>
<dbReference type="GO" id="GO:0008654">
    <property type="term" value="P:phospholipid biosynthetic process"/>
    <property type="evidence" value="ECO:0007669"/>
    <property type="project" value="UniProtKB-KW"/>
</dbReference>
<dbReference type="FunFam" id="3.40.50.720:FF:000019">
    <property type="entry name" value="Glycerol-3-phosphate dehydrogenase [NAD(P)+]"/>
    <property type="match status" value="1"/>
</dbReference>
<dbReference type="Gene3D" id="1.10.1040.10">
    <property type="entry name" value="N-(1-d-carboxylethyl)-l-norvaline Dehydrogenase, domain 2"/>
    <property type="match status" value="1"/>
</dbReference>
<dbReference type="Gene3D" id="3.40.50.720">
    <property type="entry name" value="NAD(P)-binding Rossmann-like Domain"/>
    <property type="match status" value="1"/>
</dbReference>
<dbReference type="HAMAP" id="MF_00394">
    <property type="entry name" value="NAD_Glyc3P_dehydrog"/>
    <property type="match status" value="1"/>
</dbReference>
<dbReference type="InterPro" id="IPR008927">
    <property type="entry name" value="6-PGluconate_DH-like_C_sf"/>
</dbReference>
<dbReference type="InterPro" id="IPR013328">
    <property type="entry name" value="6PGD_dom2"/>
</dbReference>
<dbReference type="InterPro" id="IPR006168">
    <property type="entry name" value="G3P_DH_NAD-dep"/>
</dbReference>
<dbReference type="InterPro" id="IPR006109">
    <property type="entry name" value="G3P_DH_NAD-dep_C"/>
</dbReference>
<dbReference type="InterPro" id="IPR011128">
    <property type="entry name" value="G3P_DH_NAD-dep_N"/>
</dbReference>
<dbReference type="InterPro" id="IPR036291">
    <property type="entry name" value="NAD(P)-bd_dom_sf"/>
</dbReference>
<dbReference type="NCBIfam" id="NF000940">
    <property type="entry name" value="PRK00094.1-2"/>
    <property type="match status" value="1"/>
</dbReference>
<dbReference type="NCBIfam" id="NF000942">
    <property type="entry name" value="PRK00094.1-4"/>
    <property type="match status" value="1"/>
</dbReference>
<dbReference type="PANTHER" id="PTHR11728">
    <property type="entry name" value="GLYCEROL-3-PHOSPHATE DEHYDROGENASE"/>
    <property type="match status" value="1"/>
</dbReference>
<dbReference type="PANTHER" id="PTHR11728:SF1">
    <property type="entry name" value="GLYCEROL-3-PHOSPHATE DEHYDROGENASE [NAD(+)] 2, CHLOROPLASTIC"/>
    <property type="match status" value="1"/>
</dbReference>
<dbReference type="Pfam" id="PF07479">
    <property type="entry name" value="NAD_Gly3P_dh_C"/>
    <property type="match status" value="1"/>
</dbReference>
<dbReference type="Pfam" id="PF01210">
    <property type="entry name" value="NAD_Gly3P_dh_N"/>
    <property type="match status" value="1"/>
</dbReference>
<dbReference type="PIRSF" id="PIRSF000114">
    <property type="entry name" value="Glycerol-3-P_dh"/>
    <property type="match status" value="1"/>
</dbReference>
<dbReference type="PRINTS" id="PR00077">
    <property type="entry name" value="GPDHDRGNASE"/>
</dbReference>
<dbReference type="SUPFAM" id="SSF48179">
    <property type="entry name" value="6-phosphogluconate dehydrogenase C-terminal domain-like"/>
    <property type="match status" value="1"/>
</dbReference>
<dbReference type="SUPFAM" id="SSF51735">
    <property type="entry name" value="NAD(P)-binding Rossmann-fold domains"/>
    <property type="match status" value="1"/>
</dbReference>
<dbReference type="PROSITE" id="PS00957">
    <property type="entry name" value="NAD_G3PDH"/>
    <property type="match status" value="1"/>
</dbReference>
<keyword id="KW-0963">Cytoplasm</keyword>
<keyword id="KW-0444">Lipid biosynthesis</keyword>
<keyword id="KW-0443">Lipid metabolism</keyword>
<keyword id="KW-0520">NAD</keyword>
<keyword id="KW-0521">NADP</keyword>
<keyword id="KW-0547">Nucleotide-binding</keyword>
<keyword id="KW-0560">Oxidoreductase</keyword>
<keyword id="KW-0594">Phospholipid biosynthesis</keyword>
<keyword id="KW-1208">Phospholipid metabolism</keyword>
<comment type="function">
    <text evidence="1">Catalyzes the reduction of the glycolytic intermediate dihydroxyacetone phosphate (DHAP) to sn-glycerol 3-phosphate (G3P), the key precursor for phospholipid synthesis.</text>
</comment>
<comment type="catalytic activity">
    <reaction evidence="1">
        <text>sn-glycerol 3-phosphate + NAD(+) = dihydroxyacetone phosphate + NADH + H(+)</text>
        <dbReference type="Rhea" id="RHEA:11092"/>
        <dbReference type="ChEBI" id="CHEBI:15378"/>
        <dbReference type="ChEBI" id="CHEBI:57540"/>
        <dbReference type="ChEBI" id="CHEBI:57597"/>
        <dbReference type="ChEBI" id="CHEBI:57642"/>
        <dbReference type="ChEBI" id="CHEBI:57945"/>
        <dbReference type="EC" id="1.1.1.94"/>
    </reaction>
    <physiologicalReaction direction="right-to-left" evidence="1">
        <dbReference type="Rhea" id="RHEA:11094"/>
    </physiologicalReaction>
</comment>
<comment type="catalytic activity">
    <reaction evidence="1">
        <text>sn-glycerol 3-phosphate + NADP(+) = dihydroxyacetone phosphate + NADPH + H(+)</text>
        <dbReference type="Rhea" id="RHEA:11096"/>
        <dbReference type="ChEBI" id="CHEBI:15378"/>
        <dbReference type="ChEBI" id="CHEBI:57597"/>
        <dbReference type="ChEBI" id="CHEBI:57642"/>
        <dbReference type="ChEBI" id="CHEBI:57783"/>
        <dbReference type="ChEBI" id="CHEBI:58349"/>
        <dbReference type="EC" id="1.1.1.94"/>
    </reaction>
    <physiologicalReaction direction="right-to-left" evidence="1">
        <dbReference type="Rhea" id="RHEA:11098"/>
    </physiologicalReaction>
</comment>
<comment type="pathway">
    <text evidence="1">Membrane lipid metabolism; glycerophospholipid metabolism.</text>
</comment>
<comment type="subcellular location">
    <subcellularLocation>
        <location evidence="1">Cytoplasm</location>
    </subcellularLocation>
</comment>
<comment type="similarity">
    <text evidence="1">Belongs to the NAD-dependent glycerol-3-phosphate dehydrogenase family.</text>
</comment>
<name>GPDA_RHIJ3</name>
<proteinExistence type="inferred from homology"/>
<accession>Q1MAQ9</accession>
<reference key="1">
    <citation type="journal article" date="2006" name="Genome Biol.">
        <title>The genome of Rhizobium leguminosarum has recognizable core and accessory components.</title>
        <authorList>
            <person name="Young J.P.W."/>
            <person name="Crossman L.C."/>
            <person name="Johnston A.W.B."/>
            <person name="Thomson N.R."/>
            <person name="Ghazoui Z.F."/>
            <person name="Hull K.H."/>
            <person name="Wexler M."/>
            <person name="Curson A.R.J."/>
            <person name="Todd J.D."/>
            <person name="Poole P.S."/>
            <person name="Mauchline T.H."/>
            <person name="East A.K."/>
            <person name="Quail M.A."/>
            <person name="Churcher C."/>
            <person name="Arrowsmith C."/>
            <person name="Cherevach I."/>
            <person name="Chillingworth T."/>
            <person name="Clarke K."/>
            <person name="Cronin A."/>
            <person name="Davis P."/>
            <person name="Fraser A."/>
            <person name="Hance Z."/>
            <person name="Hauser H."/>
            <person name="Jagels K."/>
            <person name="Moule S."/>
            <person name="Mungall K."/>
            <person name="Norbertczak H."/>
            <person name="Rabbinowitsch E."/>
            <person name="Sanders M."/>
            <person name="Simmonds M."/>
            <person name="Whitehead S."/>
            <person name="Parkhill J."/>
        </authorList>
    </citation>
    <scope>NUCLEOTIDE SEQUENCE [LARGE SCALE GENOMIC DNA]</scope>
    <source>
        <strain>DSM 114642 / LMG 32736 / 3841</strain>
    </source>
</reference>
<organism>
    <name type="scientific">Rhizobium johnstonii (strain DSM 114642 / LMG 32736 / 3841)</name>
    <name type="common">Rhizobium leguminosarum bv. viciae</name>
    <dbReference type="NCBI Taxonomy" id="216596"/>
    <lineage>
        <taxon>Bacteria</taxon>
        <taxon>Pseudomonadati</taxon>
        <taxon>Pseudomonadota</taxon>
        <taxon>Alphaproteobacteria</taxon>
        <taxon>Hyphomicrobiales</taxon>
        <taxon>Rhizobiaceae</taxon>
        <taxon>Rhizobium/Agrobacterium group</taxon>
        <taxon>Rhizobium</taxon>
        <taxon>Rhizobium johnstonii</taxon>
    </lineage>
</organism>
<feature type="chain" id="PRO_0000255353" description="Glycerol-3-phosphate dehydrogenase [NAD(P)+]">
    <location>
        <begin position="1"/>
        <end position="327"/>
    </location>
</feature>
<feature type="active site" description="Proton acceptor" evidence="1">
    <location>
        <position position="190"/>
    </location>
</feature>
<feature type="binding site" evidence="1">
    <location>
        <position position="13"/>
    </location>
    <ligand>
        <name>NADPH</name>
        <dbReference type="ChEBI" id="CHEBI:57783"/>
    </ligand>
</feature>
<feature type="binding site" evidence="1">
    <location>
        <position position="34"/>
    </location>
    <ligand>
        <name>NADPH</name>
        <dbReference type="ChEBI" id="CHEBI:57783"/>
    </ligand>
</feature>
<feature type="binding site" evidence="1">
    <location>
        <position position="107"/>
    </location>
    <ligand>
        <name>NADPH</name>
        <dbReference type="ChEBI" id="CHEBI:57783"/>
    </ligand>
</feature>
<feature type="binding site" evidence="1">
    <location>
        <position position="107"/>
    </location>
    <ligand>
        <name>sn-glycerol 3-phosphate</name>
        <dbReference type="ChEBI" id="CHEBI:57597"/>
    </ligand>
</feature>
<feature type="binding site" evidence="1">
    <location>
        <position position="135"/>
    </location>
    <ligand>
        <name>sn-glycerol 3-phosphate</name>
        <dbReference type="ChEBI" id="CHEBI:57597"/>
    </ligand>
</feature>
<feature type="binding site" evidence="1">
    <location>
        <position position="139"/>
    </location>
    <ligand>
        <name>NADPH</name>
        <dbReference type="ChEBI" id="CHEBI:57783"/>
    </ligand>
</feature>
<feature type="binding site" evidence="1">
    <location>
        <position position="190"/>
    </location>
    <ligand>
        <name>sn-glycerol 3-phosphate</name>
        <dbReference type="ChEBI" id="CHEBI:57597"/>
    </ligand>
</feature>
<feature type="binding site" evidence="1">
    <location>
        <position position="243"/>
    </location>
    <ligand>
        <name>sn-glycerol 3-phosphate</name>
        <dbReference type="ChEBI" id="CHEBI:57597"/>
    </ligand>
</feature>
<feature type="binding site" evidence="1">
    <location>
        <position position="253"/>
    </location>
    <ligand>
        <name>sn-glycerol 3-phosphate</name>
        <dbReference type="ChEBI" id="CHEBI:57597"/>
    </ligand>
</feature>
<feature type="binding site" evidence="1">
    <location>
        <position position="254"/>
    </location>
    <ligand>
        <name>NADPH</name>
        <dbReference type="ChEBI" id="CHEBI:57783"/>
    </ligand>
</feature>
<feature type="binding site" evidence="1">
    <location>
        <position position="254"/>
    </location>
    <ligand>
        <name>sn-glycerol 3-phosphate</name>
        <dbReference type="ChEBI" id="CHEBI:57597"/>
    </ligand>
</feature>
<feature type="binding site" evidence="1">
    <location>
        <position position="255"/>
    </location>
    <ligand>
        <name>sn-glycerol 3-phosphate</name>
        <dbReference type="ChEBI" id="CHEBI:57597"/>
    </ligand>
</feature>
<feature type="binding site" evidence="1">
    <location>
        <position position="276"/>
    </location>
    <ligand>
        <name>NADPH</name>
        <dbReference type="ChEBI" id="CHEBI:57783"/>
    </ligand>
</feature>
<feature type="binding site" evidence="1">
    <location>
        <position position="277"/>
    </location>
    <ligand>
        <name>NADPH</name>
        <dbReference type="ChEBI" id="CHEBI:57783"/>
    </ligand>
</feature>
<evidence type="ECO:0000255" key="1">
    <source>
        <dbReference type="HAMAP-Rule" id="MF_00394"/>
    </source>
</evidence>
<sequence>MSENIAVVGSGAFGTALAAVIALAGRSAVTLVGRDPSLIADLKAERLHDAVLPGILLPDTLEFSAEADAITGASIVLFAMPSQAQADAARQYGPYLCKDAVVVTCAKGIERATGNLLTDMLERELPDHSIAVLSGPGFAADIAKGLPTAMAIAAADMETAERLAQAISGRTFRLYASNDRIGVQLGGALKNVLAIACGIVEGRGIGDSARAALIARGLAEMSRFVVAKGGQADTVRGLSGLGDLVLTATSHQSRNLRFGIALGRGEKTDPLQGALVEGAFAASVASRLAAELKVSMPITDAVSAIIDGKLDISEAIEQLMTRPITTE</sequence>
<protein>
    <recommendedName>
        <fullName evidence="1">Glycerol-3-phosphate dehydrogenase [NAD(P)+]</fullName>
        <ecNumber evidence="1">1.1.1.94</ecNumber>
    </recommendedName>
    <alternativeName>
        <fullName evidence="1">NAD(P)(+)-dependent glycerol-3-phosphate dehydrogenase</fullName>
    </alternativeName>
    <alternativeName>
        <fullName evidence="1">NAD(P)H-dependent dihydroxyacetone-phosphate reductase</fullName>
    </alternativeName>
</protein>